<dbReference type="EMBL" id="Z94043">
    <property type="protein sequence ID" value="CAB08052.1"/>
    <property type="molecule type" value="Genomic_DNA"/>
</dbReference>
<dbReference type="EMBL" id="AL009126">
    <property type="protein sequence ID" value="CAB15486.1"/>
    <property type="molecule type" value="Genomic_DNA"/>
</dbReference>
<dbReference type="PIR" id="E70031">
    <property type="entry name" value="E70031"/>
</dbReference>
<dbReference type="RefSeq" id="NP_391361.1">
    <property type="nucleotide sequence ID" value="NC_000964.3"/>
</dbReference>
<dbReference type="RefSeq" id="WP_003242799.1">
    <property type="nucleotide sequence ID" value="NZ_OZ025638.1"/>
</dbReference>
<dbReference type="SMR" id="O06968"/>
<dbReference type="FunCoup" id="O06968">
    <property type="interactions" value="153"/>
</dbReference>
<dbReference type="IntAct" id="O06968">
    <property type="interactions" value="4"/>
</dbReference>
<dbReference type="STRING" id="224308.BSU34810"/>
<dbReference type="PaxDb" id="224308-BSU34810"/>
<dbReference type="EnsemblBacteria" id="CAB15486">
    <property type="protein sequence ID" value="CAB15486"/>
    <property type="gene ID" value="BSU_34810"/>
</dbReference>
<dbReference type="GeneID" id="936542"/>
<dbReference type="KEGG" id="bsu:BSU34810"/>
<dbReference type="PATRIC" id="fig|224308.179.peg.3769"/>
<dbReference type="eggNOG" id="COG0457">
    <property type="taxonomic scope" value="Bacteria"/>
</dbReference>
<dbReference type="InParanoid" id="O06968"/>
<dbReference type="OrthoDB" id="600613at2"/>
<dbReference type="PhylomeDB" id="O06968"/>
<dbReference type="BioCyc" id="BSUB:BSU34810-MONOMER"/>
<dbReference type="Proteomes" id="UP000001570">
    <property type="component" value="Chromosome"/>
</dbReference>
<dbReference type="Gene3D" id="1.25.40.10">
    <property type="entry name" value="Tetratricopeptide repeat domain"/>
    <property type="match status" value="2"/>
</dbReference>
<dbReference type="InterPro" id="IPR011990">
    <property type="entry name" value="TPR-like_helical_dom_sf"/>
</dbReference>
<dbReference type="InterPro" id="IPR019734">
    <property type="entry name" value="TPR_rpt"/>
</dbReference>
<dbReference type="Pfam" id="PF13432">
    <property type="entry name" value="TPR_16"/>
    <property type="match status" value="1"/>
</dbReference>
<dbReference type="SMART" id="SM00028">
    <property type="entry name" value="TPR"/>
    <property type="match status" value="3"/>
</dbReference>
<dbReference type="SUPFAM" id="SSF48452">
    <property type="entry name" value="TPR-like"/>
    <property type="match status" value="1"/>
</dbReference>
<dbReference type="PROSITE" id="PS50005">
    <property type="entry name" value="TPR"/>
    <property type="match status" value="3"/>
</dbReference>
<dbReference type="PROSITE" id="PS50293">
    <property type="entry name" value="TPR_REGION"/>
    <property type="match status" value="2"/>
</dbReference>
<organism>
    <name type="scientific">Bacillus subtilis (strain 168)</name>
    <dbReference type="NCBI Taxonomy" id="224308"/>
    <lineage>
        <taxon>Bacteria</taxon>
        <taxon>Bacillati</taxon>
        <taxon>Bacillota</taxon>
        <taxon>Bacilli</taxon>
        <taxon>Bacillales</taxon>
        <taxon>Bacillaceae</taxon>
        <taxon>Bacillus</taxon>
    </lineage>
</organism>
<sequence length="484" mass="55375">MGKHTSEHKNHAQIVQLLQDGQYFFHKGLKAYKERNLKRASKLIQRAVHLEPEDSEMLSQLAVIYSEMGQYQESNDLLDYIMANLEAEMPECHYFKANNFAHLGLFQEAYKEAAAYSDADPDGEFAEENDSLLDLLDLGDDGIEDSLYDQDELLVKQDRAKSLLESGQLAEAVAALEEITTEYPELWSAYNNLALAYFYSGNVVKAKQTAYEVLSHNEGNLHALCNLLVFYYYEREDEKVAELSDQLSNVYPMLLEQRYKLGATLALVGRYEIGYKWLKSLYKTGFEGDDTFFYWLSCSAYFTGHTDFAETIWRKVESQYPGEDRPAPWIERREALPSSVEQRLAAYYISSTKGETEHLEAVIRSKRITAPFETHFVKLLLNGDSAAADVSEDALFAYQTVKLLEQAEKEEMKTEVMSCWVFHVIQQIRAAAPLKNEKGWAAAICYIWKEAHGKQDTKKDTAARFGISPATLTKYMKYIDDILE</sequence>
<reference key="1">
    <citation type="submission" date="1997-04" db="EMBL/GenBank/DDBJ databases">
        <authorList>
            <person name="Denizot F."/>
        </authorList>
    </citation>
    <scope>NUCLEOTIDE SEQUENCE [GENOMIC DNA]</scope>
</reference>
<reference key="2">
    <citation type="journal article" date="1997" name="Nature">
        <title>The complete genome sequence of the Gram-positive bacterium Bacillus subtilis.</title>
        <authorList>
            <person name="Kunst F."/>
            <person name="Ogasawara N."/>
            <person name="Moszer I."/>
            <person name="Albertini A.M."/>
            <person name="Alloni G."/>
            <person name="Azevedo V."/>
            <person name="Bertero M.G."/>
            <person name="Bessieres P."/>
            <person name="Bolotin A."/>
            <person name="Borchert S."/>
            <person name="Borriss R."/>
            <person name="Boursier L."/>
            <person name="Brans A."/>
            <person name="Braun M."/>
            <person name="Brignell S.C."/>
            <person name="Bron S."/>
            <person name="Brouillet S."/>
            <person name="Bruschi C.V."/>
            <person name="Caldwell B."/>
            <person name="Capuano V."/>
            <person name="Carter N.M."/>
            <person name="Choi S.-K."/>
            <person name="Codani J.-J."/>
            <person name="Connerton I.F."/>
            <person name="Cummings N.J."/>
            <person name="Daniel R.A."/>
            <person name="Denizot F."/>
            <person name="Devine K.M."/>
            <person name="Duesterhoeft A."/>
            <person name="Ehrlich S.D."/>
            <person name="Emmerson P.T."/>
            <person name="Entian K.-D."/>
            <person name="Errington J."/>
            <person name="Fabret C."/>
            <person name="Ferrari E."/>
            <person name="Foulger D."/>
            <person name="Fritz C."/>
            <person name="Fujita M."/>
            <person name="Fujita Y."/>
            <person name="Fuma S."/>
            <person name="Galizzi A."/>
            <person name="Galleron N."/>
            <person name="Ghim S.-Y."/>
            <person name="Glaser P."/>
            <person name="Goffeau A."/>
            <person name="Golightly E.J."/>
            <person name="Grandi G."/>
            <person name="Guiseppi G."/>
            <person name="Guy B.J."/>
            <person name="Haga K."/>
            <person name="Haiech J."/>
            <person name="Harwood C.R."/>
            <person name="Henaut A."/>
            <person name="Hilbert H."/>
            <person name="Holsappel S."/>
            <person name="Hosono S."/>
            <person name="Hullo M.-F."/>
            <person name="Itaya M."/>
            <person name="Jones L.-M."/>
            <person name="Joris B."/>
            <person name="Karamata D."/>
            <person name="Kasahara Y."/>
            <person name="Klaerr-Blanchard M."/>
            <person name="Klein C."/>
            <person name="Kobayashi Y."/>
            <person name="Koetter P."/>
            <person name="Koningstein G."/>
            <person name="Krogh S."/>
            <person name="Kumano M."/>
            <person name="Kurita K."/>
            <person name="Lapidus A."/>
            <person name="Lardinois S."/>
            <person name="Lauber J."/>
            <person name="Lazarevic V."/>
            <person name="Lee S.-M."/>
            <person name="Levine A."/>
            <person name="Liu H."/>
            <person name="Masuda S."/>
            <person name="Mauel C."/>
            <person name="Medigue C."/>
            <person name="Medina N."/>
            <person name="Mellado R.P."/>
            <person name="Mizuno M."/>
            <person name="Moestl D."/>
            <person name="Nakai S."/>
            <person name="Noback M."/>
            <person name="Noone D."/>
            <person name="O'Reilly M."/>
            <person name="Ogawa K."/>
            <person name="Ogiwara A."/>
            <person name="Oudega B."/>
            <person name="Park S.-H."/>
            <person name="Parro V."/>
            <person name="Pohl T.M."/>
            <person name="Portetelle D."/>
            <person name="Porwollik S."/>
            <person name="Prescott A.M."/>
            <person name="Presecan E."/>
            <person name="Pujic P."/>
            <person name="Purnelle B."/>
            <person name="Rapoport G."/>
            <person name="Rey M."/>
            <person name="Reynolds S."/>
            <person name="Rieger M."/>
            <person name="Rivolta C."/>
            <person name="Rocha E."/>
            <person name="Roche B."/>
            <person name="Rose M."/>
            <person name="Sadaie Y."/>
            <person name="Sato T."/>
            <person name="Scanlan E."/>
            <person name="Schleich S."/>
            <person name="Schroeter R."/>
            <person name="Scoffone F."/>
            <person name="Sekiguchi J."/>
            <person name="Sekowska A."/>
            <person name="Seror S.J."/>
            <person name="Serror P."/>
            <person name="Shin B.-S."/>
            <person name="Soldo B."/>
            <person name="Sorokin A."/>
            <person name="Tacconi E."/>
            <person name="Takagi T."/>
            <person name="Takahashi H."/>
            <person name="Takemaru K."/>
            <person name="Takeuchi M."/>
            <person name="Tamakoshi A."/>
            <person name="Tanaka T."/>
            <person name="Terpstra P."/>
            <person name="Tognoni A."/>
            <person name="Tosato V."/>
            <person name="Uchiyama S."/>
            <person name="Vandenbol M."/>
            <person name="Vannier F."/>
            <person name="Vassarotti A."/>
            <person name="Viari A."/>
            <person name="Wambutt R."/>
            <person name="Wedler E."/>
            <person name="Wedler H."/>
            <person name="Weitzenegger T."/>
            <person name="Winters P."/>
            <person name="Wipat A."/>
            <person name="Yamamoto H."/>
            <person name="Yamane K."/>
            <person name="Yasumoto K."/>
            <person name="Yata K."/>
            <person name="Yoshida K."/>
            <person name="Yoshikawa H.-F."/>
            <person name="Zumstein E."/>
            <person name="Yoshikawa H."/>
            <person name="Danchin A."/>
        </authorList>
    </citation>
    <scope>NUCLEOTIDE SEQUENCE [LARGE SCALE GENOMIC DNA]</scope>
    <source>
        <strain>168</strain>
    </source>
</reference>
<keyword id="KW-1185">Reference proteome</keyword>
<keyword id="KW-0677">Repeat</keyword>
<keyword id="KW-0802">TPR repeat</keyword>
<feature type="chain" id="PRO_0000375867" description="TPR repeat-containing protein YvcD">
    <location>
        <begin position="1"/>
        <end position="484"/>
    </location>
</feature>
<feature type="repeat" description="TPR 1">
    <location>
        <begin position="21"/>
        <end position="54"/>
    </location>
</feature>
<feature type="repeat" description="TPR 2">
    <location>
        <begin position="55"/>
        <end position="88"/>
    </location>
</feature>
<feature type="repeat" description="TPR 3">
    <location>
        <begin position="187"/>
        <end position="220"/>
    </location>
</feature>
<accession>O06968</accession>
<accession>Q795F7</accession>
<gene>
    <name type="primary">yvcD</name>
    <name type="ordered locus">BSU34810</name>
</gene>
<name>YVCD_BACSU</name>
<proteinExistence type="predicted"/>
<protein>
    <recommendedName>
        <fullName>TPR repeat-containing protein YvcD</fullName>
    </recommendedName>
</protein>